<reference key="1">
    <citation type="journal article" date="2007" name="J. Bacteriol.">
        <title>The genome sequence of avian pathogenic Escherichia coli strain O1:K1:H7 shares strong similarities with human extraintestinal pathogenic E. coli genomes.</title>
        <authorList>
            <person name="Johnson T.J."/>
            <person name="Kariyawasam S."/>
            <person name="Wannemuehler Y."/>
            <person name="Mangiamele P."/>
            <person name="Johnson S.J."/>
            <person name="Doetkott C."/>
            <person name="Skyberg J.A."/>
            <person name="Lynne A.M."/>
            <person name="Johnson J.R."/>
            <person name="Nolan L.K."/>
        </authorList>
    </citation>
    <scope>NUCLEOTIDE SEQUENCE [LARGE SCALE GENOMIC DNA]</scope>
</reference>
<protein>
    <recommendedName>
        <fullName evidence="1">L-rhamnose mutarotase</fullName>
        <ecNumber evidence="1">5.1.3.32</ecNumber>
    </recommendedName>
    <alternativeName>
        <fullName evidence="1">Rhamnose 1-epimerase</fullName>
    </alternativeName>
    <alternativeName>
        <fullName evidence="1">Type-3 mutarotase</fullName>
    </alternativeName>
</protein>
<keyword id="KW-0119">Carbohydrate metabolism</keyword>
<keyword id="KW-0963">Cytoplasm</keyword>
<keyword id="KW-0413">Isomerase</keyword>
<keyword id="KW-1185">Reference proteome</keyword>
<keyword id="KW-0684">Rhamnose metabolism</keyword>
<organism>
    <name type="scientific">Escherichia coli O1:K1 / APEC</name>
    <dbReference type="NCBI Taxonomy" id="405955"/>
    <lineage>
        <taxon>Bacteria</taxon>
        <taxon>Pseudomonadati</taxon>
        <taxon>Pseudomonadota</taxon>
        <taxon>Gammaproteobacteria</taxon>
        <taxon>Enterobacterales</taxon>
        <taxon>Enterobacteriaceae</taxon>
        <taxon>Escherichia</taxon>
    </lineage>
</organism>
<name>RHAM_ECOK1</name>
<accession>A1AI78</accession>
<comment type="function">
    <text evidence="1">Involved in the anomeric conversion of L-rhamnose.</text>
</comment>
<comment type="catalytic activity">
    <reaction evidence="1">
        <text>alpha-L-rhamnose = beta-L-rhamnose</text>
        <dbReference type="Rhea" id="RHEA:25584"/>
        <dbReference type="ChEBI" id="CHEBI:27586"/>
        <dbReference type="ChEBI" id="CHEBI:27907"/>
        <dbReference type="EC" id="5.1.3.32"/>
    </reaction>
</comment>
<comment type="pathway">
    <text evidence="1">Carbohydrate metabolism; L-rhamnose metabolism.</text>
</comment>
<comment type="subunit">
    <text evidence="1">Homodimer.</text>
</comment>
<comment type="subcellular location">
    <subcellularLocation>
        <location evidence="1">Cytoplasm</location>
    </subcellularLocation>
</comment>
<comment type="similarity">
    <text evidence="1">Belongs to the rhamnose mutarotase family.</text>
</comment>
<dbReference type="EC" id="5.1.3.32" evidence="1"/>
<dbReference type="EMBL" id="CP000468">
    <property type="protein sequence ID" value="ABJ03368.1"/>
    <property type="molecule type" value="Genomic_DNA"/>
</dbReference>
<dbReference type="RefSeq" id="WP_000619492.1">
    <property type="nucleotide sequence ID" value="NZ_CADILS010000014.1"/>
</dbReference>
<dbReference type="BMRB" id="A1AI78"/>
<dbReference type="SMR" id="A1AI78"/>
<dbReference type="KEGG" id="ecv:APECO1_2567"/>
<dbReference type="HOGENOM" id="CLU_100689_2_0_6"/>
<dbReference type="UniPathway" id="UPA00125"/>
<dbReference type="Proteomes" id="UP000008216">
    <property type="component" value="Chromosome"/>
</dbReference>
<dbReference type="GO" id="GO:0005737">
    <property type="term" value="C:cytoplasm"/>
    <property type="evidence" value="ECO:0007669"/>
    <property type="project" value="UniProtKB-SubCell"/>
</dbReference>
<dbReference type="GO" id="GO:0062192">
    <property type="term" value="F:L-rhamnose mutarotase activity"/>
    <property type="evidence" value="ECO:0007669"/>
    <property type="project" value="UniProtKB-EC"/>
</dbReference>
<dbReference type="GO" id="GO:0019301">
    <property type="term" value="P:rhamnose catabolic process"/>
    <property type="evidence" value="ECO:0007669"/>
    <property type="project" value="TreeGrafter"/>
</dbReference>
<dbReference type="FunFam" id="3.30.70.100:FF:000013">
    <property type="entry name" value="L-rhamnose mutarotase"/>
    <property type="match status" value="1"/>
</dbReference>
<dbReference type="Gene3D" id="3.30.70.100">
    <property type="match status" value="1"/>
</dbReference>
<dbReference type="HAMAP" id="MF_01663">
    <property type="entry name" value="L_rham_rotase"/>
    <property type="match status" value="1"/>
</dbReference>
<dbReference type="InterPro" id="IPR011008">
    <property type="entry name" value="Dimeric_a/b-barrel"/>
</dbReference>
<dbReference type="InterPro" id="IPR013448">
    <property type="entry name" value="L-rhamnose_mutarotase"/>
</dbReference>
<dbReference type="InterPro" id="IPR008000">
    <property type="entry name" value="Rham/fucose_mutarotase"/>
</dbReference>
<dbReference type="NCBIfam" id="TIGR02625">
    <property type="entry name" value="YiiL_rotase"/>
    <property type="match status" value="1"/>
</dbReference>
<dbReference type="PANTHER" id="PTHR34389">
    <property type="entry name" value="L-RHAMNOSE MUTAROTASE"/>
    <property type="match status" value="1"/>
</dbReference>
<dbReference type="PANTHER" id="PTHR34389:SF2">
    <property type="entry name" value="L-RHAMNOSE MUTAROTASE"/>
    <property type="match status" value="1"/>
</dbReference>
<dbReference type="Pfam" id="PF05336">
    <property type="entry name" value="rhaM"/>
    <property type="match status" value="1"/>
</dbReference>
<dbReference type="SUPFAM" id="SSF54909">
    <property type="entry name" value="Dimeric alpha+beta barrel"/>
    <property type="match status" value="1"/>
</dbReference>
<gene>
    <name evidence="1" type="primary">rhaM</name>
    <name type="ordered locus">Ecok1_38740</name>
    <name type="ORF">APECO1_2567</name>
</gene>
<evidence type="ECO:0000255" key="1">
    <source>
        <dbReference type="HAMAP-Rule" id="MF_01663"/>
    </source>
</evidence>
<proteinExistence type="inferred from homology"/>
<sequence>MIRKAFVMQVNPDAHEEYQRRHNPIWPELEAVLKSHGAHNYAIYLDKAHNLLFATVEIESEERWNAVASTDVCQRWWKYMTDVMPANADNSPVSSELQEVFYLP</sequence>
<feature type="chain" id="PRO_0000344575" description="L-rhamnose mutarotase">
    <location>
        <begin position="1"/>
        <end position="104"/>
    </location>
</feature>
<feature type="active site" description="Proton donor" evidence="1">
    <location>
        <position position="22"/>
    </location>
</feature>
<feature type="binding site" evidence="1">
    <location>
        <position position="18"/>
    </location>
    <ligand>
        <name>substrate</name>
    </ligand>
</feature>
<feature type="binding site" evidence="1">
    <location>
        <position position="41"/>
    </location>
    <ligand>
        <name>substrate</name>
    </ligand>
</feature>
<feature type="binding site" evidence="1">
    <location>
        <begin position="76"/>
        <end position="77"/>
    </location>
    <ligand>
        <name>substrate</name>
    </ligand>
</feature>